<gene>
    <name evidence="1" type="primary">rplW</name>
    <name type="ordered locus">ABO_0399</name>
</gene>
<reference key="1">
    <citation type="journal article" date="2006" name="Nat. Biotechnol.">
        <title>Genome sequence of the ubiquitous hydrocarbon-degrading marine bacterium Alcanivorax borkumensis.</title>
        <authorList>
            <person name="Schneiker S."/>
            <person name="Martins dos Santos V.A.P."/>
            <person name="Bartels D."/>
            <person name="Bekel T."/>
            <person name="Brecht M."/>
            <person name="Buhrmester J."/>
            <person name="Chernikova T.N."/>
            <person name="Denaro R."/>
            <person name="Ferrer M."/>
            <person name="Gertler C."/>
            <person name="Goesmann A."/>
            <person name="Golyshina O.V."/>
            <person name="Kaminski F."/>
            <person name="Khachane A.N."/>
            <person name="Lang S."/>
            <person name="Linke B."/>
            <person name="McHardy A.C."/>
            <person name="Meyer F."/>
            <person name="Nechitaylo T."/>
            <person name="Puehler A."/>
            <person name="Regenhardt D."/>
            <person name="Rupp O."/>
            <person name="Sabirova J.S."/>
            <person name="Selbitschka W."/>
            <person name="Yakimov M.M."/>
            <person name="Timmis K.N."/>
            <person name="Vorhoelter F.-J."/>
            <person name="Weidner S."/>
            <person name="Kaiser O."/>
            <person name="Golyshin P.N."/>
        </authorList>
    </citation>
    <scope>NUCLEOTIDE SEQUENCE [LARGE SCALE GENOMIC DNA]</scope>
    <source>
        <strain>ATCC 700651 / DSM 11573 / NCIMB 13689 / SK2</strain>
    </source>
</reference>
<evidence type="ECO:0000255" key="1">
    <source>
        <dbReference type="HAMAP-Rule" id="MF_01369"/>
    </source>
</evidence>
<evidence type="ECO:0000305" key="2"/>
<sequence length="98" mass="10969">MNQERILQVLRAPHVSEKATVQADQNNTFVFKVAKDASKLEIKKAVEALFEVKVEAVRTANMKGKSKFFGRVAGKRVDWKKAYVSLAEGQDIDFLGAE</sequence>
<dbReference type="EMBL" id="AM286690">
    <property type="protein sequence ID" value="CAL15847.1"/>
    <property type="molecule type" value="Genomic_DNA"/>
</dbReference>
<dbReference type="RefSeq" id="WP_011587692.1">
    <property type="nucleotide sequence ID" value="NC_008260.1"/>
</dbReference>
<dbReference type="SMR" id="Q0VSK1"/>
<dbReference type="STRING" id="393595.ABO_0399"/>
<dbReference type="KEGG" id="abo:ABO_0399"/>
<dbReference type="eggNOG" id="COG0089">
    <property type="taxonomic scope" value="Bacteria"/>
</dbReference>
<dbReference type="HOGENOM" id="CLU_037562_3_1_6"/>
<dbReference type="OrthoDB" id="9793353at2"/>
<dbReference type="Proteomes" id="UP000008871">
    <property type="component" value="Chromosome"/>
</dbReference>
<dbReference type="GO" id="GO:1990904">
    <property type="term" value="C:ribonucleoprotein complex"/>
    <property type="evidence" value="ECO:0007669"/>
    <property type="project" value="UniProtKB-KW"/>
</dbReference>
<dbReference type="GO" id="GO:0005840">
    <property type="term" value="C:ribosome"/>
    <property type="evidence" value="ECO:0007669"/>
    <property type="project" value="UniProtKB-KW"/>
</dbReference>
<dbReference type="GO" id="GO:0019843">
    <property type="term" value="F:rRNA binding"/>
    <property type="evidence" value="ECO:0007669"/>
    <property type="project" value="UniProtKB-UniRule"/>
</dbReference>
<dbReference type="GO" id="GO:0003735">
    <property type="term" value="F:structural constituent of ribosome"/>
    <property type="evidence" value="ECO:0007669"/>
    <property type="project" value="InterPro"/>
</dbReference>
<dbReference type="GO" id="GO:0006412">
    <property type="term" value="P:translation"/>
    <property type="evidence" value="ECO:0007669"/>
    <property type="project" value="UniProtKB-UniRule"/>
</dbReference>
<dbReference type="FunFam" id="3.30.70.330:FF:000001">
    <property type="entry name" value="50S ribosomal protein L23"/>
    <property type="match status" value="1"/>
</dbReference>
<dbReference type="Gene3D" id="3.30.70.330">
    <property type="match status" value="1"/>
</dbReference>
<dbReference type="HAMAP" id="MF_01369_B">
    <property type="entry name" value="Ribosomal_uL23_B"/>
    <property type="match status" value="1"/>
</dbReference>
<dbReference type="InterPro" id="IPR012677">
    <property type="entry name" value="Nucleotide-bd_a/b_plait_sf"/>
</dbReference>
<dbReference type="InterPro" id="IPR013025">
    <property type="entry name" value="Ribosomal_uL23-like"/>
</dbReference>
<dbReference type="InterPro" id="IPR012678">
    <property type="entry name" value="Ribosomal_uL23/eL15/eS24_sf"/>
</dbReference>
<dbReference type="NCBIfam" id="NF004358">
    <property type="entry name" value="PRK05738.1-1"/>
    <property type="match status" value="1"/>
</dbReference>
<dbReference type="NCBIfam" id="NF004359">
    <property type="entry name" value="PRK05738.1-3"/>
    <property type="match status" value="1"/>
</dbReference>
<dbReference type="NCBIfam" id="NF004363">
    <property type="entry name" value="PRK05738.2-4"/>
    <property type="match status" value="1"/>
</dbReference>
<dbReference type="PANTHER" id="PTHR11620">
    <property type="entry name" value="60S RIBOSOMAL PROTEIN L23A"/>
    <property type="match status" value="1"/>
</dbReference>
<dbReference type="Pfam" id="PF00276">
    <property type="entry name" value="Ribosomal_L23"/>
    <property type="match status" value="1"/>
</dbReference>
<dbReference type="SUPFAM" id="SSF54189">
    <property type="entry name" value="Ribosomal proteins S24e, L23 and L15e"/>
    <property type="match status" value="1"/>
</dbReference>
<proteinExistence type="inferred from homology"/>
<feature type="chain" id="PRO_0000272693" description="Large ribosomal subunit protein uL23">
    <location>
        <begin position="1"/>
        <end position="98"/>
    </location>
</feature>
<organism>
    <name type="scientific">Alcanivorax borkumensis (strain ATCC 700651 / DSM 11573 / NCIMB 13689 / SK2)</name>
    <dbReference type="NCBI Taxonomy" id="393595"/>
    <lineage>
        <taxon>Bacteria</taxon>
        <taxon>Pseudomonadati</taxon>
        <taxon>Pseudomonadota</taxon>
        <taxon>Gammaproteobacteria</taxon>
        <taxon>Oceanospirillales</taxon>
        <taxon>Alcanivoracaceae</taxon>
        <taxon>Alcanivorax</taxon>
    </lineage>
</organism>
<keyword id="KW-1185">Reference proteome</keyword>
<keyword id="KW-0687">Ribonucleoprotein</keyword>
<keyword id="KW-0689">Ribosomal protein</keyword>
<keyword id="KW-0694">RNA-binding</keyword>
<keyword id="KW-0699">rRNA-binding</keyword>
<comment type="function">
    <text evidence="1">One of the early assembly proteins it binds 23S rRNA. One of the proteins that surrounds the polypeptide exit tunnel on the outside of the ribosome. Forms the main docking site for trigger factor binding to the ribosome.</text>
</comment>
<comment type="subunit">
    <text evidence="1">Part of the 50S ribosomal subunit. Contacts protein L29, and trigger factor when it is bound to the ribosome.</text>
</comment>
<comment type="similarity">
    <text evidence="1">Belongs to the universal ribosomal protein uL23 family.</text>
</comment>
<protein>
    <recommendedName>
        <fullName evidence="1">Large ribosomal subunit protein uL23</fullName>
    </recommendedName>
    <alternativeName>
        <fullName evidence="2">50S ribosomal protein L23</fullName>
    </alternativeName>
</protein>
<accession>Q0VSK1</accession>
<name>RL23_ALCBS</name>